<protein>
    <recommendedName>
        <fullName>Ras-related protein Rab-32B</fullName>
    </recommendedName>
</protein>
<evidence type="ECO:0000250" key="1"/>
<evidence type="ECO:0000256" key="2">
    <source>
        <dbReference type="SAM" id="MobiDB-lite"/>
    </source>
</evidence>
<evidence type="ECO:0000305" key="3"/>
<keyword id="KW-0342">GTP-binding</keyword>
<keyword id="KW-0449">Lipoprotein</keyword>
<keyword id="KW-0547">Nucleotide-binding</keyword>
<keyword id="KW-0636">Prenylation</keyword>
<keyword id="KW-1185">Reference proteome</keyword>
<reference key="1">
    <citation type="journal article" date="2005" name="Nature">
        <title>The genome of the social amoeba Dictyostelium discoideum.</title>
        <authorList>
            <person name="Eichinger L."/>
            <person name="Pachebat J.A."/>
            <person name="Gloeckner G."/>
            <person name="Rajandream M.A."/>
            <person name="Sucgang R."/>
            <person name="Berriman M."/>
            <person name="Song J."/>
            <person name="Olsen R."/>
            <person name="Szafranski K."/>
            <person name="Xu Q."/>
            <person name="Tunggal B."/>
            <person name="Kummerfeld S."/>
            <person name="Madera M."/>
            <person name="Konfortov B.A."/>
            <person name="Rivero F."/>
            <person name="Bankier A.T."/>
            <person name="Lehmann R."/>
            <person name="Hamlin N."/>
            <person name="Davies R."/>
            <person name="Gaudet P."/>
            <person name="Fey P."/>
            <person name="Pilcher K."/>
            <person name="Chen G."/>
            <person name="Saunders D."/>
            <person name="Sodergren E.J."/>
            <person name="Davis P."/>
            <person name="Kerhornou A."/>
            <person name="Nie X."/>
            <person name="Hall N."/>
            <person name="Anjard C."/>
            <person name="Hemphill L."/>
            <person name="Bason N."/>
            <person name="Farbrother P."/>
            <person name="Desany B."/>
            <person name="Just E."/>
            <person name="Morio T."/>
            <person name="Rost R."/>
            <person name="Churcher C.M."/>
            <person name="Cooper J."/>
            <person name="Haydock S."/>
            <person name="van Driessche N."/>
            <person name="Cronin A."/>
            <person name="Goodhead I."/>
            <person name="Muzny D.M."/>
            <person name="Mourier T."/>
            <person name="Pain A."/>
            <person name="Lu M."/>
            <person name="Harper D."/>
            <person name="Lindsay R."/>
            <person name="Hauser H."/>
            <person name="James K.D."/>
            <person name="Quiles M."/>
            <person name="Madan Babu M."/>
            <person name="Saito T."/>
            <person name="Buchrieser C."/>
            <person name="Wardroper A."/>
            <person name="Felder M."/>
            <person name="Thangavelu M."/>
            <person name="Johnson D."/>
            <person name="Knights A."/>
            <person name="Loulseged H."/>
            <person name="Mungall K.L."/>
            <person name="Oliver K."/>
            <person name="Price C."/>
            <person name="Quail M.A."/>
            <person name="Urushihara H."/>
            <person name="Hernandez J."/>
            <person name="Rabbinowitsch E."/>
            <person name="Steffen D."/>
            <person name="Sanders M."/>
            <person name="Ma J."/>
            <person name="Kohara Y."/>
            <person name="Sharp S."/>
            <person name="Simmonds M.N."/>
            <person name="Spiegler S."/>
            <person name="Tivey A."/>
            <person name="Sugano S."/>
            <person name="White B."/>
            <person name="Walker D."/>
            <person name="Woodward J.R."/>
            <person name="Winckler T."/>
            <person name="Tanaka Y."/>
            <person name="Shaulsky G."/>
            <person name="Schleicher M."/>
            <person name="Weinstock G.M."/>
            <person name="Rosenthal A."/>
            <person name="Cox E.C."/>
            <person name="Chisholm R.L."/>
            <person name="Gibbs R.A."/>
            <person name="Loomis W.F."/>
            <person name="Platzer M."/>
            <person name="Kay R.R."/>
            <person name="Williams J.G."/>
            <person name="Dear P.H."/>
            <person name="Noegel A.A."/>
            <person name="Barrell B.G."/>
            <person name="Kuspa A."/>
        </authorList>
    </citation>
    <scope>NUCLEOTIDE SEQUENCE [LARGE SCALE GENOMIC DNA]</scope>
    <source>
        <strain>AX4</strain>
    </source>
</reference>
<accession>Q55E31</accession>
<sequence>MNRGDIFAKEFDTDPDVSTDSNYNNNNNSNNNNSIISNSNNNNNNNNNNVDDTDIEKHLYKVLLIGDYAVGKSSIIKRYCTGIFSPNYKLTIGVDFSVKDIEWEKNKIVSLQLWDIAGHERFGTMTRVYYRYAIAAIIVFDLSRPSTFDAVTKWREDVNSKVVLANQEPIPVLLLANKSDLSTSYVDSEMLDRFCKENNFIGWFATSASNDTNINEAMHFLTKEILEVAKTNHPPKPEEDTLELTKTNGEKSDDSKSCCK</sequence>
<dbReference type="EMBL" id="AAFI02000005">
    <property type="protein sequence ID" value="EAL72058.1"/>
    <property type="molecule type" value="Genomic_DNA"/>
</dbReference>
<dbReference type="RefSeq" id="XP_645950.1">
    <property type="nucleotide sequence ID" value="XM_640858.1"/>
</dbReference>
<dbReference type="SMR" id="Q55E31"/>
<dbReference type="PaxDb" id="44689-DDB0229397"/>
<dbReference type="EnsemblProtists" id="EAL72058">
    <property type="protein sequence ID" value="EAL72058"/>
    <property type="gene ID" value="DDB_G0269416"/>
</dbReference>
<dbReference type="GeneID" id="8616894"/>
<dbReference type="KEGG" id="ddi:DDB_G0269416"/>
<dbReference type="dictyBase" id="DDB_G0269416">
    <property type="gene designation" value="rab32B"/>
</dbReference>
<dbReference type="VEuPathDB" id="AmoebaDB:DDB_G0269416"/>
<dbReference type="eggNOG" id="KOG4423">
    <property type="taxonomic scope" value="Eukaryota"/>
</dbReference>
<dbReference type="HOGENOM" id="CLU_041217_10_6_1"/>
<dbReference type="InParanoid" id="Q55E31"/>
<dbReference type="OMA" id="KITLQLW"/>
<dbReference type="PhylomeDB" id="Q55E31"/>
<dbReference type="PRO" id="PR:Q55E31"/>
<dbReference type="Proteomes" id="UP000002195">
    <property type="component" value="Chromosome 1"/>
</dbReference>
<dbReference type="GO" id="GO:0012505">
    <property type="term" value="C:endomembrane system"/>
    <property type="evidence" value="ECO:0000318"/>
    <property type="project" value="GO_Central"/>
</dbReference>
<dbReference type="GO" id="GO:0005802">
    <property type="term" value="C:trans-Golgi network"/>
    <property type="evidence" value="ECO:0000318"/>
    <property type="project" value="GO_Central"/>
</dbReference>
<dbReference type="GO" id="GO:0031982">
    <property type="term" value="C:vesicle"/>
    <property type="evidence" value="ECO:0007669"/>
    <property type="project" value="InterPro"/>
</dbReference>
<dbReference type="GO" id="GO:0005525">
    <property type="term" value="F:GTP binding"/>
    <property type="evidence" value="ECO:0007669"/>
    <property type="project" value="UniProtKB-KW"/>
</dbReference>
<dbReference type="GO" id="GO:0003924">
    <property type="term" value="F:GTPase activity"/>
    <property type="evidence" value="ECO:0000318"/>
    <property type="project" value="GO_Central"/>
</dbReference>
<dbReference type="GO" id="GO:0006886">
    <property type="term" value="P:intracellular protein transport"/>
    <property type="evidence" value="ECO:0000318"/>
    <property type="project" value="GO_Central"/>
</dbReference>
<dbReference type="GO" id="GO:0032438">
    <property type="term" value="P:melanosome organization"/>
    <property type="evidence" value="ECO:0000318"/>
    <property type="project" value="GO_Central"/>
</dbReference>
<dbReference type="GO" id="GO:0016192">
    <property type="term" value="P:vesicle-mediated transport"/>
    <property type="evidence" value="ECO:0007669"/>
    <property type="project" value="InterPro"/>
</dbReference>
<dbReference type="CDD" id="cd04107">
    <property type="entry name" value="Rab32_Rab38"/>
    <property type="match status" value="1"/>
</dbReference>
<dbReference type="FunFam" id="3.40.50.300:FF:002133">
    <property type="entry name" value="Ras family protein"/>
    <property type="match status" value="1"/>
</dbReference>
<dbReference type="Gene3D" id="3.40.50.300">
    <property type="entry name" value="P-loop containing nucleotide triphosphate hydrolases"/>
    <property type="match status" value="1"/>
</dbReference>
<dbReference type="InterPro" id="IPR027417">
    <property type="entry name" value="P-loop_NTPase"/>
</dbReference>
<dbReference type="InterPro" id="IPR030697">
    <property type="entry name" value="Rab29/Rab38/Rab32"/>
</dbReference>
<dbReference type="InterPro" id="IPR005225">
    <property type="entry name" value="Small_GTP-bd"/>
</dbReference>
<dbReference type="InterPro" id="IPR001806">
    <property type="entry name" value="Small_GTPase"/>
</dbReference>
<dbReference type="NCBIfam" id="TIGR00231">
    <property type="entry name" value="small_GTP"/>
    <property type="match status" value="1"/>
</dbReference>
<dbReference type="PANTHER" id="PTHR47981">
    <property type="entry name" value="RAB FAMILY"/>
    <property type="match status" value="1"/>
</dbReference>
<dbReference type="PANTHER" id="PTHR47981:SF39">
    <property type="entry name" value="RAS-RELATED PROTEIN RAB"/>
    <property type="match status" value="1"/>
</dbReference>
<dbReference type="Pfam" id="PF00071">
    <property type="entry name" value="Ras"/>
    <property type="match status" value="1"/>
</dbReference>
<dbReference type="PRINTS" id="PR00449">
    <property type="entry name" value="RASTRNSFRMNG"/>
</dbReference>
<dbReference type="SMART" id="SM00175">
    <property type="entry name" value="RAB"/>
    <property type="match status" value="1"/>
</dbReference>
<dbReference type="SMART" id="SM00176">
    <property type="entry name" value="RAN"/>
    <property type="match status" value="1"/>
</dbReference>
<dbReference type="SMART" id="SM00173">
    <property type="entry name" value="RAS"/>
    <property type="match status" value="1"/>
</dbReference>
<dbReference type="SMART" id="SM00174">
    <property type="entry name" value="RHO"/>
    <property type="match status" value="1"/>
</dbReference>
<dbReference type="SUPFAM" id="SSF52540">
    <property type="entry name" value="P-loop containing nucleoside triphosphate hydrolases"/>
    <property type="match status" value="1"/>
</dbReference>
<dbReference type="PROSITE" id="PS51419">
    <property type="entry name" value="RAB"/>
    <property type="match status" value="1"/>
</dbReference>
<proteinExistence type="inferred from homology"/>
<feature type="chain" id="PRO_0000330642" description="Ras-related protein Rab-32B">
    <location>
        <begin position="1"/>
        <end position="260"/>
    </location>
</feature>
<feature type="region of interest" description="Disordered" evidence="2">
    <location>
        <begin position="11"/>
        <end position="50"/>
    </location>
</feature>
<feature type="region of interest" description="Disordered" evidence="2">
    <location>
        <begin position="231"/>
        <end position="260"/>
    </location>
</feature>
<feature type="short sequence motif" description="Effector region" evidence="1">
    <location>
        <begin position="88"/>
        <end position="96"/>
    </location>
</feature>
<feature type="compositionally biased region" description="Low complexity" evidence="2">
    <location>
        <begin position="21"/>
        <end position="49"/>
    </location>
</feature>
<feature type="compositionally biased region" description="Basic and acidic residues" evidence="2">
    <location>
        <begin position="248"/>
        <end position="260"/>
    </location>
</feature>
<feature type="binding site" evidence="1">
    <location>
        <begin position="66"/>
        <end position="73"/>
    </location>
    <ligand>
        <name>GTP</name>
        <dbReference type="ChEBI" id="CHEBI:37565"/>
    </ligand>
</feature>
<feature type="binding site" evidence="1">
    <location>
        <begin position="115"/>
        <end position="119"/>
    </location>
    <ligand>
        <name>GTP</name>
        <dbReference type="ChEBI" id="CHEBI:37565"/>
    </ligand>
</feature>
<feature type="binding site" evidence="1">
    <location>
        <begin position="177"/>
        <end position="180"/>
    </location>
    <ligand>
        <name>GTP</name>
        <dbReference type="ChEBI" id="CHEBI:37565"/>
    </ligand>
</feature>
<feature type="lipid moiety-binding region" description="S-geranylgeranyl cysteine" evidence="1">
    <location>
        <position position="258"/>
    </location>
</feature>
<feature type="lipid moiety-binding region" description="S-geranylgeranyl cysteine" evidence="1">
    <location>
        <position position="259"/>
    </location>
</feature>
<gene>
    <name type="primary">rab32B</name>
    <name type="ORF">DDB_G0269416</name>
</gene>
<name>RB32B_DICDI</name>
<organism>
    <name type="scientific">Dictyostelium discoideum</name>
    <name type="common">Social amoeba</name>
    <dbReference type="NCBI Taxonomy" id="44689"/>
    <lineage>
        <taxon>Eukaryota</taxon>
        <taxon>Amoebozoa</taxon>
        <taxon>Evosea</taxon>
        <taxon>Eumycetozoa</taxon>
        <taxon>Dictyostelia</taxon>
        <taxon>Dictyosteliales</taxon>
        <taxon>Dictyosteliaceae</taxon>
        <taxon>Dictyostelium</taxon>
    </lineage>
</organism>
<comment type="similarity">
    <text evidence="3">Belongs to the small GTPase superfamily. Rab family.</text>
</comment>